<proteinExistence type="inferred from homology"/>
<sequence>MTTREYDYIICGAGSAGNVLATRLTEDPDVTVLLLEAGGPDYRFDFRTQMPAALAYPLQGRRYNWAYETDPEPHMDNRRMECGRGKGLGGSSLINGMCYIRGNALDYDNWSTHKGLENWTYLDCLPYFKKAETRDVGPNDYHGGSGPVSVTTSKPGVNPLFEAMVDAGVQAGYPRTDDLNGYQQEGFGPMDRTVTPKGRRASTARGYLDQAKVRPNLEIVTHALADRILFDGKRASGVTYLRGSERATAHARREVLVCSGAIASPQLLQRSGVGPGAWLKELDIPVVLDLPGVGQNLQDHLEMYIQYECKEPVSLYPALKWWNQPKIGLEWMLNGTGLGASNHFEAGGFIRTRDDDPWPNIQYHFLPVAINYNGSNAIEMHGFQAHVGSMRSPSRGRVKLRSRDPNDHPSILFNYMAEALDWREFRDAIRATREIMRQPALDRYRGRELNPGADCKSDKELDAFVRARAETAFHPSCSCKMGYDDMAVVDEEGRVHGLDGLRVVDASIMPIITTGNLNAPTIMIAEKIADKIRGRQPLARVDVPYFVANGAPARNVAKAVRQPETV</sequence>
<organism>
    <name type="scientific">Burkholderia orbicola (strain MC0-3)</name>
    <dbReference type="NCBI Taxonomy" id="406425"/>
    <lineage>
        <taxon>Bacteria</taxon>
        <taxon>Pseudomonadati</taxon>
        <taxon>Pseudomonadota</taxon>
        <taxon>Betaproteobacteria</taxon>
        <taxon>Burkholderiales</taxon>
        <taxon>Burkholderiaceae</taxon>
        <taxon>Burkholderia</taxon>
        <taxon>Burkholderia cepacia complex</taxon>
        <taxon>Burkholderia orbicola</taxon>
    </lineage>
</organism>
<name>BETA_BURO0</name>
<keyword id="KW-0274">FAD</keyword>
<keyword id="KW-0285">Flavoprotein</keyword>
<keyword id="KW-0520">NAD</keyword>
<keyword id="KW-0560">Oxidoreductase</keyword>
<protein>
    <recommendedName>
        <fullName evidence="1">Oxygen-dependent choline dehydrogenase</fullName>
        <shortName evidence="1">CDH</shortName>
        <shortName evidence="1">CHD</shortName>
        <ecNumber evidence="1">1.1.99.1</ecNumber>
    </recommendedName>
    <alternativeName>
        <fullName evidence="1">Betaine aldehyde dehydrogenase</fullName>
        <shortName evidence="1">BADH</shortName>
        <ecNumber evidence="1">1.2.1.8</ecNumber>
    </alternativeName>
</protein>
<gene>
    <name evidence="1" type="primary">betA</name>
    <name type="ordered locus">Bcenmc03_5182</name>
</gene>
<accession>B1K707</accession>
<feature type="chain" id="PRO_1000133321" description="Oxygen-dependent choline dehydrogenase">
    <location>
        <begin position="1"/>
        <end position="566"/>
    </location>
</feature>
<feature type="region of interest" description="Disordered" evidence="2">
    <location>
        <begin position="180"/>
        <end position="202"/>
    </location>
</feature>
<feature type="active site" description="Proton acceptor" evidence="1">
    <location>
        <position position="474"/>
    </location>
</feature>
<feature type="binding site" evidence="1">
    <location>
        <begin position="7"/>
        <end position="36"/>
    </location>
    <ligand>
        <name>FAD</name>
        <dbReference type="ChEBI" id="CHEBI:57692"/>
    </ligand>
</feature>
<reference key="1">
    <citation type="submission" date="2008-02" db="EMBL/GenBank/DDBJ databases">
        <title>Complete sequence of chromosome 2 of Burkholderia cenocepacia MC0-3.</title>
        <authorList>
            <person name="Copeland A."/>
            <person name="Lucas S."/>
            <person name="Lapidus A."/>
            <person name="Barry K."/>
            <person name="Bruce D."/>
            <person name="Goodwin L."/>
            <person name="Glavina del Rio T."/>
            <person name="Dalin E."/>
            <person name="Tice H."/>
            <person name="Pitluck S."/>
            <person name="Chain P."/>
            <person name="Malfatti S."/>
            <person name="Shin M."/>
            <person name="Vergez L."/>
            <person name="Schmutz J."/>
            <person name="Larimer F."/>
            <person name="Land M."/>
            <person name="Hauser L."/>
            <person name="Kyrpides N."/>
            <person name="Mikhailova N."/>
            <person name="Tiedje J."/>
            <person name="Richardson P."/>
        </authorList>
    </citation>
    <scope>NUCLEOTIDE SEQUENCE [LARGE SCALE GENOMIC DNA]</scope>
    <source>
        <strain>MC0-3</strain>
    </source>
</reference>
<evidence type="ECO:0000255" key="1">
    <source>
        <dbReference type="HAMAP-Rule" id="MF_00750"/>
    </source>
</evidence>
<evidence type="ECO:0000256" key="2">
    <source>
        <dbReference type="SAM" id="MobiDB-lite"/>
    </source>
</evidence>
<comment type="function">
    <text evidence="1">Involved in the biosynthesis of the osmoprotectant glycine betaine. Catalyzes the oxidation of choline to betaine aldehyde and betaine aldehyde to glycine betaine at the same rate.</text>
</comment>
<comment type="catalytic activity">
    <reaction evidence="1">
        <text>choline + A = betaine aldehyde + AH2</text>
        <dbReference type="Rhea" id="RHEA:17433"/>
        <dbReference type="ChEBI" id="CHEBI:13193"/>
        <dbReference type="ChEBI" id="CHEBI:15354"/>
        <dbReference type="ChEBI" id="CHEBI:15710"/>
        <dbReference type="ChEBI" id="CHEBI:17499"/>
        <dbReference type="EC" id="1.1.99.1"/>
    </reaction>
</comment>
<comment type="catalytic activity">
    <reaction evidence="1">
        <text>betaine aldehyde + NAD(+) + H2O = glycine betaine + NADH + 2 H(+)</text>
        <dbReference type="Rhea" id="RHEA:15305"/>
        <dbReference type="ChEBI" id="CHEBI:15377"/>
        <dbReference type="ChEBI" id="CHEBI:15378"/>
        <dbReference type="ChEBI" id="CHEBI:15710"/>
        <dbReference type="ChEBI" id="CHEBI:17750"/>
        <dbReference type="ChEBI" id="CHEBI:57540"/>
        <dbReference type="ChEBI" id="CHEBI:57945"/>
        <dbReference type="EC" id="1.2.1.8"/>
    </reaction>
</comment>
<comment type="cofactor">
    <cofactor evidence="1">
        <name>FAD</name>
        <dbReference type="ChEBI" id="CHEBI:57692"/>
    </cofactor>
</comment>
<comment type="pathway">
    <text evidence="1">Amine and polyamine biosynthesis; betaine biosynthesis via choline pathway; betaine aldehyde from choline (cytochrome c reductase route): step 1/1.</text>
</comment>
<comment type="similarity">
    <text evidence="1">Belongs to the GMC oxidoreductase family.</text>
</comment>
<dbReference type="EC" id="1.1.99.1" evidence="1"/>
<dbReference type="EC" id="1.2.1.8" evidence="1"/>
<dbReference type="EMBL" id="CP000959">
    <property type="protein sequence ID" value="ACA94311.1"/>
    <property type="molecule type" value="Genomic_DNA"/>
</dbReference>
<dbReference type="RefSeq" id="WP_012339517.1">
    <property type="nucleotide sequence ID" value="NC_010515.1"/>
</dbReference>
<dbReference type="SMR" id="B1K707"/>
<dbReference type="CAZy" id="AA3">
    <property type="family name" value="Auxiliary Activities 3"/>
</dbReference>
<dbReference type="GeneID" id="83051870"/>
<dbReference type="KEGG" id="bcm:Bcenmc03_5182"/>
<dbReference type="HOGENOM" id="CLU_002865_7_1_4"/>
<dbReference type="UniPathway" id="UPA00529">
    <property type="reaction ID" value="UER00385"/>
</dbReference>
<dbReference type="Proteomes" id="UP000002169">
    <property type="component" value="Chromosome 2"/>
</dbReference>
<dbReference type="GO" id="GO:0016020">
    <property type="term" value="C:membrane"/>
    <property type="evidence" value="ECO:0007669"/>
    <property type="project" value="TreeGrafter"/>
</dbReference>
<dbReference type="GO" id="GO:0008802">
    <property type="term" value="F:betaine-aldehyde dehydrogenase (NAD+) activity"/>
    <property type="evidence" value="ECO:0007669"/>
    <property type="project" value="UniProtKB-EC"/>
</dbReference>
<dbReference type="GO" id="GO:0008812">
    <property type="term" value="F:choline dehydrogenase activity"/>
    <property type="evidence" value="ECO:0007669"/>
    <property type="project" value="UniProtKB-UniRule"/>
</dbReference>
<dbReference type="GO" id="GO:0050660">
    <property type="term" value="F:flavin adenine dinucleotide binding"/>
    <property type="evidence" value="ECO:0007669"/>
    <property type="project" value="InterPro"/>
</dbReference>
<dbReference type="GO" id="GO:0019285">
    <property type="term" value="P:glycine betaine biosynthetic process from choline"/>
    <property type="evidence" value="ECO:0007669"/>
    <property type="project" value="UniProtKB-UniRule"/>
</dbReference>
<dbReference type="Gene3D" id="3.50.50.60">
    <property type="entry name" value="FAD/NAD(P)-binding domain"/>
    <property type="match status" value="1"/>
</dbReference>
<dbReference type="Gene3D" id="3.30.560.10">
    <property type="entry name" value="Glucose Oxidase, domain 3"/>
    <property type="match status" value="1"/>
</dbReference>
<dbReference type="HAMAP" id="MF_00750">
    <property type="entry name" value="Choline_dehydrogen"/>
    <property type="match status" value="1"/>
</dbReference>
<dbReference type="InterPro" id="IPR011533">
    <property type="entry name" value="BetA"/>
</dbReference>
<dbReference type="InterPro" id="IPR036188">
    <property type="entry name" value="FAD/NAD-bd_sf"/>
</dbReference>
<dbReference type="InterPro" id="IPR012132">
    <property type="entry name" value="GMC_OxRdtase"/>
</dbReference>
<dbReference type="InterPro" id="IPR000172">
    <property type="entry name" value="GMC_OxRdtase_N"/>
</dbReference>
<dbReference type="InterPro" id="IPR007867">
    <property type="entry name" value="GMC_OxRtase_C"/>
</dbReference>
<dbReference type="NCBIfam" id="TIGR01810">
    <property type="entry name" value="betA"/>
    <property type="match status" value="1"/>
</dbReference>
<dbReference type="NCBIfam" id="NF002550">
    <property type="entry name" value="PRK02106.1"/>
    <property type="match status" value="1"/>
</dbReference>
<dbReference type="PANTHER" id="PTHR11552:SF147">
    <property type="entry name" value="CHOLINE DEHYDROGENASE, MITOCHONDRIAL"/>
    <property type="match status" value="1"/>
</dbReference>
<dbReference type="PANTHER" id="PTHR11552">
    <property type="entry name" value="GLUCOSE-METHANOL-CHOLINE GMC OXIDOREDUCTASE"/>
    <property type="match status" value="1"/>
</dbReference>
<dbReference type="Pfam" id="PF05199">
    <property type="entry name" value="GMC_oxred_C"/>
    <property type="match status" value="1"/>
</dbReference>
<dbReference type="Pfam" id="PF00732">
    <property type="entry name" value="GMC_oxred_N"/>
    <property type="match status" value="1"/>
</dbReference>
<dbReference type="PIRSF" id="PIRSF000137">
    <property type="entry name" value="Alcohol_oxidase"/>
    <property type="match status" value="1"/>
</dbReference>
<dbReference type="SUPFAM" id="SSF54373">
    <property type="entry name" value="FAD-linked reductases, C-terminal domain"/>
    <property type="match status" value="1"/>
</dbReference>
<dbReference type="SUPFAM" id="SSF51905">
    <property type="entry name" value="FAD/NAD(P)-binding domain"/>
    <property type="match status" value="1"/>
</dbReference>
<dbReference type="PROSITE" id="PS00623">
    <property type="entry name" value="GMC_OXRED_1"/>
    <property type="match status" value="1"/>
</dbReference>
<dbReference type="PROSITE" id="PS00624">
    <property type="entry name" value="GMC_OXRED_2"/>
    <property type="match status" value="1"/>
</dbReference>